<gene>
    <name evidence="1" type="primary">ispH</name>
    <name type="ordered locus">Psyr_0713</name>
</gene>
<accession>Q4ZYJ1</accession>
<feature type="chain" id="PRO_1000021166" description="4-hydroxy-3-methylbut-2-enyl diphosphate reductase">
    <location>
        <begin position="1"/>
        <end position="315"/>
    </location>
</feature>
<feature type="active site" description="Proton donor" evidence="1">
    <location>
        <position position="126"/>
    </location>
</feature>
<feature type="binding site" evidence="1">
    <location>
        <position position="12"/>
    </location>
    <ligand>
        <name>[4Fe-4S] cluster</name>
        <dbReference type="ChEBI" id="CHEBI:49883"/>
    </ligand>
</feature>
<feature type="binding site" evidence="1">
    <location>
        <position position="41"/>
    </location>
    <ligand>
        <name>(2E)-4-hydroxy-3-methylbut-2-enyl diphosphate</name>
        <dbReference type="ChEBI" id="CHEBI:128753"/>
    </ligand>
</feature>
<feature type="binding site" evidence="1">
    <location>
        <position position="41"/>
    </location>
    <ligand>
        <name>dimethylallyl diphosphate</name>
        <dbReference type="ChEBI" id="CHEBI:57623"/>
    </ligand>
</feature>
<feature type="binding site" evidence="1">
    <location>
        <position position="41"/>
    </location>
    <ligand>
        <name>isopentenyl diphosphate</name>
        <dbReference type="ChEBI" id="CHEBI:128769"/>
    </ligand>
</feature>
<feature type="binding site" evidence="1">
    <location>
        <position position="74"/>
    </location>
    <ligand>
        <name>(2E)-4-hydroxy-3-methylbut-2-enyl diphosphate</name>
        <dbReference type="ChEBI" id="CHEBI:128753"/>
    </ligand>
</feature>
<feature type="binding site" evidence="1">
    <location>
        <position position="74"/>
    </location>
    <ligand>
        <name>dimethylallyl diphosphate</name>
        <dbReference type="ChEBI" id="CHEBI:57623"/>
    </ligand>
</feature>
<feature type="binding site" evidence="1">
    <location>
        <position position="74"/>
    </location>
    <ligand>
        <name>isopentenyl diphosphate</name>
        <dbReference type="ChEBI" id="CHEBI:128769"/>
    </ligand>
</feature>
<feature type="binding site" evidence="1">
    <location>
        <position position="96"/>
    </location>
    <ligand>
        <name>[4Fe-4S] cluster</name>
        <dbReference type="ChEBI" id="CHEBI:49883"/>
    </ligand>
</feature>
<feature type="binding site" evidence="1">
    <location>
        <position position="124"/>
    </location>
    <ligand>
        <name>(2E)-4-hydroxy-3-methylbut-2-enyl diphosphate</name>
        <dbReference type="ChEBI" id="CHEBI:128753"/>
    </ligand>
</feature>
<feature type="binding site" evidence="1">
    <location>
        <position position="124"/>
    </location>
    <ligand>
        <name>dimethylallyl diphosphate</name>
        <dbReference type="ChEBI" id="CHEBI:57623"/>
    </ligand>
</feature>
<feature type="binding site" evidence="1">
    <location>
        <position position="124"/>
    </location>
    <ligand>
        <name>isopentenyl diphosphate</name>
        <dbReference type="ChEBI" id="CHEBI:128769"/>
    </ligand>
</feature>
<feature type="binding site" evidence="1">
    <location>
        <position position="168"/>
    </location>
    <ligand>
        <name>(2E)-4-hydroxy-3-methylbut-2-enyl diphosphate</name>
        <dbReference type="ChEBI" id="CHEBI:128753"/>
    </ligand>
</feature>
<feature type="binding site" evidence="1">
    <location>
        <position position="198"/>
    </location>
    <ligand>
        <name>[4Fe-4S] cluster</name>
        <dbReference type="ChEBI" id="CHEBI:49883"/>
    </ligand>
</feature>
<feature type="binding site" evidence="1">
    <location>
        <position position="226"/>
    </location>
    <ligand>
        <name>(2E)-4-hydroxy-3-methylbut-2-enyl diphosphate</name>
        <dbReference type="ChEBI" id="CHEBI:128753"/>
    </ligand>
</feature>
<feature type="binding site" evidence="1">
    <location>
        <position position="226"/>
    </location>
    <ligand>
        <name>dimethylallyl diphosphate</name>
        <dbReference type="ChEBI" id="CHEBI:57623"/>
    </ligand>
</feature>
<feature type="binding site" evidence="1">
    <location>
        <position position="226"/>
    </location>
    <ligand>
        <name>isopentenyl diphosphate</name>
        <dbReference type="ChEBI" id="CHEBI:128769"/>
    </ligand>
</feature>
<feature type="binding site" evidence="1">
    <location>
        <position position="227"/>
    </location>
    <ligand>
        <name>(2E)-4-hydroxy-3-methylbut-2-enyl diphosphate</name>
        <dbReference type="ChEBI" id="CHEBI:128753"/>
    </ligand>
</feature>
<feature type="binding site" evidence="1">
    <location>
        <position position="227"/>
    </location>
    <ligand>
        <name>dimethylallyl diphosphate</name>
        <dbReference type="ChEBI" id="CHEBI:57623"/>
    </ligand>
</feature>
<feature type="binding site" evidence="1">
    <location>
        <position position="227"/>
    </location>
    <ligand>
        <name>isopentenyl diphosphate</name>
        <dbReference type="ChEBI" id="CHEBI:128769"/>
    </ligand>
</feature>
<feature type="binding site" evidence="1">
    <location>
        <position position="228"/>
    </location>
    <ligand>
        <name>(2E)-4-hydroxy-3-methylbut-2-enyl diphosphate</name>
        <dbReference type="ChEBI" id="CHEBI:128753"/>
    </ligand>
</feature>
<feature type="binding site" evidence="1">
    <location>
        <position position="228"/>
    </location>
    <ligand>
        <name>dimethylallyl diphosphate</name>
        <dbReference type="ChEBI" id="CHEBI:57623"/>
    </ligand>
</feature>
<feature type="binding site" evidence="1">
    <location>
        <position position="228"/>
    </location>
    <ligand>
        <name>isopentenyl diphosphate</name>
        <dbReference type="ChEBI" id="CHEBI:128769"/>
    </ligand>
</feature>
<feature type="binding site" evidence="1">
    <location>
        <position position="270"/>
    </location>
    <ligand>
        <name>(2E)-4-hydroxy-3-methylbut-2-enyl diphosphate</name>
        <dbReference type="ChEBI" id="CHEBI:128753"/>
    </ligand>
</feature>
<feature type="binding site" evidence="1">
    <location>
        <position position="270"/>
    </location>
    <ligand>
        <name>dimethylallyl diphosphate</name>
        <dbReference type="ChEBI" id="CHEBI:57623"/>
    </ligand>
</feature>
<feature type="binding site" evidence="1">
    <location>
        <position position="270"/>
    </location>
    <ligand>
        <name>isopentenyl diphosphate</name>
        <dbReference type="ChEBI" id="CHEBI:128769"/>
    </ligand>
</feature>
<evidence type="ECO:0000255" key="1">
    <source>
        <dbReference type="HAMAP-Rule" id="MF_00191"/>
    </source>
</evidence>
<protein>
    <recommendedName>
        <fullName evidence="1">4-hydroxy-3-methylbut-2-enyl diphosphate reductase</fullName>
        <shortName evidence="1">HMBPP reductase</shortName>
        <ecNumber evidence="1">1.17.7.4</ecNumber>
    </recommendedName>
</protein>
<reference key="1">
    <citation type="journal article" date="2005" name="Proc. Natl. Acad. Sci. U.S.A.">
        <title>Comparison of the complete genome sequences of Pseudomonas syringae pv. syringae B728a and pv. tomato DC3000.</title>
        <authorList>
            <person name="Feil H."/>
            <person name="Feil W.S."/>
            <person name="Chain P."/>
            <person name="Larimer F."/>
            <person name="Dibartolo G."/>
            <person name="Copeland A."/>
            <person name="Lykidis A."/>
            <person name="Trong S."/>
            <person name="Nolan M."/>
            <person name="Goltsman E."/>
            <person name="Thiel J."/>
            <person name="Malfatti S."/>
            <person name="Loper J.E."/>
            <person name="Lapidus A."/>
            <person name="Detter J.C."/>
            <person name="Land M."/>
            <person name="Richardson P.M."/>
            <person name="Kyrpides N.C."/>
            <person name="Ivanova N."/>
            <person name="Lindow S.E."/>
        </authorList>
    </citation>
    <scope>NUCLEOTIDE SEQUENCE [LARGE SCALE GENOMIC DNA]</scope>
    <source>
        <strain>B728a</strain>
    </source>
</reference>
<dbReference type="EC" id="1.17.7.4" evidence="1"/>
<dbReference type="EMBL" id="CP000075">
    <property type="protein sequence ID" value="AAY35781.1"/>
    <property type="molecule type" value="Genomic_DNA"/>
</dbReference>
<dbReference type="RefSeq" id="WP_003318785.1">
    <property type="nucleotide sequence ID" value="NC_007005.1"/>
</dbReference>
<dbReference type="RefSeq" id="YP_233819.1">
    <property type="nucleotide sequence ID" value="NC_007005.1"/>
</dbReference>
<dbReference type="SMR" id="Q4ZYJ1"/>
<dbReference type="STRING" id="205918.Psyr_0713"/>
<dbReference type="GeneID" id="65077935"/>
<dbReference type="KEGG" id="psb:Psyr_0713"/>
<dbReference type="PATRIC" id="fig|205918.7.peg.739"/>
<dbReference type="eggNOG" id="COG0761">
    <property type="taxonomic scope" value="Bacteria"/>
</dbReference>
<dbReference type="HOGENOM" id="CLU_027486_1_0_6"/>
<dbReference type="OrthoDB" id="9804068at2"/>
<dbReference type="UniPathway" id="UPA00056">
    <property type="reaction ID" value="UER00097"/>
</dbReference>
<dbReference type="UniPathway" id="UPA00059">
    <property type="reaction ID" value="UER00105"/>
</dbReference>
<dbReference type="Proteomes" id="UP000000426">
    <property type="component" value="Chromosome"/>
</dbReference>
<dbReference type="GO" id="GO:0051539">
    <property type="term" value="F:4 iron, 4 sulfur cluster binding"/>
    <property type="evidence" value="ECO:0007669"/>
    <property type="project" value="UniProtKB-UniRule"/>
</dbReference>
<dbReference type="GO" id="GO:0051745">
    <property type="term" value="F:4-hydroxy-3-methylbut-2-enyl diphosphate reductase activity"/>
    <property type="evidence" value="ECO:0007669"/>
    <property type="project" value="UniProtKB-UniRule"/>
</dbReference>
<dbReference type="GO" id="GO:0046872">
    <property type="term" value="F:metal ion binding"/>
    <property type="evidence" value="ECO:0007669"/>
    <property type="project" value="UniProtKB-KW"/>
</dbReference>
<dbReference type="GO" id="GO:0050992">
    <property type="term" value="P:dimethylallyl diphosphate biosynthetic process"/>
    <property type="evidence" value="ECO:0007669"/>
    <property type="project" value="UniProtKB-UniRule"/>
</dbReference>
<dbReference type="GO" id="GO:0019288">
    <property type="term" value="P:isopentenyl diphosphate biosynthetic process, methylerythritol 4-phosphate pathway"/>
    <property type="evidence" value="ECO:0007669"/>
    <property type="project" value="UniProtKB-UniRule"/>
</dbReference>
<dbReference type="GO" id="GO:0016114">
    <property type="term" value="P:terpenoid biosynthetic process"/>
    <property type="evidence" value="ECO:0007669"/>
    <property type="project" value="UniProtKB-UniRule"/>
</dbReference>
<dbReference type="CDD" id="cd13944">
    <property type="entry name" value="lytB_ispH"/>
    <property type="match status" value="1"/>
</dbReference>
<dbReference type="Gene3D" id="3.40.50.11270">
    <property type="match status" value="1"/>
</dbReference>
<dbReference type="Gene3D" id="3.40.1010.20">
    <property type="entry name" value="4-hydroxy-3-methylbut-2-enyl diphosphate reductase, catalytic domain"/>
    <property type="match status" value="2"/>
</dbReference>
<dbReference type="HAMAP" id="MF_00191">
    <property type="entry name" value="IspH"/>
    <property type="match status" value="1"/>
</dbReference>
<dbReference type="InterPro" id="IPR003451">
    <property type="entry name" value="LytB/IspH"/>
</dbReference>
<dbReference type="NCBIfam" id="TIGR00216">
    <property type="entry name" value="ispH_lytB"/>
    <property type="match status" value="1"/>
</dbReference>
<dbReference type="NCBIfam" id="NF002188">
    <property type="entry name" value="PRK01045.1-2"/>
    <property type="match status" value="1"/>
</dbReference>
<dbReference type="NCBIfam" id="NF002190">
    <property type="entry name" value="PRK01045.1-4"/>
    <property type="match status" value="1"/>
</dbReference>
<dbReference type="PANTHER" id="PTHR30426">
    <property type="entry name" value="4-HYDROXY-3-METHYLBUT-2-ENYL DIPHOSPHATE REDUCTASE"/>
    <property type="match status" value="1"/>
</dbReference>
<dbReference type="PANTHER" id="PTHR30426:SF0">
    <property type="entry name" value="4-HYDROXY-3-METHYLBUT-2-ENYL DIPHOSPHATE REDUCTASE"/>
    <property type="match status" value="1"/>
</dbReference>
<dbReference type="Pfam" id="PF02401">
    <property type="entry name" value="LYTB"/>
    <property type="match status" value="1"/>
</dbReference>
<keyword id="KW-0004">4Fe-4S</keyword>
<keyword id="KW-0408">Iron</keyword>
<keyword id="KW-0411">Iron-sulfur</keyword>
<keyword id="KW-0414">Isoprene biosynthesis</keyword>
<keyword id="KW-0479">Metal-binding</keyword>
<keyword id="KW-0560">Oxidoreductase</keyword>
<organism>
    <name type="scientific">Pseudomonas syringae pv. syringae (strain B728a)</name>
    <dbReference type="NCBI Taxonomy" id="205918"/>
    <lineage>
        <taxon>Bacteria</taxon>
        <taxon>Pseudomonadati</taxon>
        <taxon>Pseudomonadota</taxon>
        <taxon>Gammaproteobacteria</taxon>
        <taxon>Pseudomonadales</taxon>
        <taxon>Pseudomonadaceae</taxon>
        <taxon>Pseudomonas</taxon>
        <taxon>Pseudomonas syringae</taxon>
    </lineage>
</organism>
<sequence>MQIKLANPRGFCAGVDRAIEIVNRALEVFGPPIYVRHEVVHNKFVVEDLRSRGAIFVEELDQVPDDVIVIFSAHGVSQAVRTEAAGRGLKVFDATCPLVTKVHIEVARYSRDGRECILIGHAGHPEVEGTMGQYDAANGGAIYLVEDEEDVASLQVRNPEALAFVTQTTLSMDDTSRVIDALRKRFPAIGGPRKDDICYATQNRQDAVKQLADECDVVLVVGSPNSSNSNRLRELAERMATPAYLIDGAEDMQQGWFDGVERIGITAGASAPEVLVRGVIQQLQAWGATGADELAGREENITFSMPKELRVKSLL</sequence>
<comment type="function">
    <text evidence="1">Catalyzes the conversion of 1-hydroxy-2-methyl-2-(E)-butenyl 4-diphosphate (HMBPP) into a mixture of isopentenyl diphosphate (IPP) and dimethylallyl diphosphate (DMAPP). Acts in the terminal step of the DOXP/MEP pathway for isoprenoid precursor biosynthesis.</text>
</comment>
<comment type="catalytic activity">
    <reaction evidence="1">
        <text>isopentenyl diphosphate + 2 oxidized [2Fe-2S]-[ferredoxin] + H2O = (2E)-4-hydroxy-3-methylbut-2-enyl diphosphate + 2 reduced [2Fe-2S]-[ferredoxin] + 2 H(+)</text>
        <dbReference type="Rhea" id="RHEA:24488"/>
        <dbReference type="Rhea" id="RHEA-COMP:10000"/>
        <dbReference type="Rhea" id="RHEA-COMP:10001"/>
        <dbReference type="ChEBI" id="CHEBI:15377"/>
        <dbReference type="ChEBI" id="CHEBI:15378"/>
        <dbReference type="ChEBI" id="CHEBI:33737"/>
        <dbReference type="ChEBI" id="CHEBI:33738"/>
        <dbReference type="ChEBI" id="CHEBI:128753"/>
        <dbReference type="ChEBI" id="CHEBI:128769"/>
        <dbReference type="EC" id="1.17.7.4"/>
    </reaction>
</comment>
<comment type="catalytic activity">
    <reaction evidence="1">
        <text>dimethylallyl diphosphate + 2 oxidized [2Fe-2S]-[ferredoxin] + H2O = (2E)-4-hydroxy-3-methylbut-2-enyl diphosphate + 2 reduced [2Fe-2S]-[ferredoxin] + 2 H(+)</text>
        <dbReference type="Rhea" id="RHEA:24825"/>
        <dbReference type="Rhea" id="RHEA-COMP:10000"/>
        <dbReference type="Rhea" id="RHEA-COMP:10001"/>
        <dbReference type="ChEBI" id="CHEBI:15377"/>
        <dbReference type="ChEBI" id="CHEBI:15378"/>
        <dbReference type="ChEBI" id="CHEBI:33737"/>
        <dbReference type="ChEBI" id="CHEBI:33738"/>
        <dbReference type="ChEBI" id="CHEBI:57623"/>
        <dbReference type="ChEBI" id="CHEBI:128753"/>
        <dbReference type="EC" id="1.17.7.4"/>
    </reaction>
</comment>
<comment type="cofactor">
    <cofactor evidence="1">
        <name>[4Fe-4S] cluster</name>
        <dbReference type="ChEBI" id="CHEBI:49883"/>
    </cofactor>
    <text evidence="1">Binds 1 [4Fe-4S] cluster per subunit.</text>
</comment>
<comment type="pathway">
    <text evidence="1">Isoprenoid biosynthesis; dimethylallyl diphosphate biosynthesis; dimethylallyl diphosphate from (2E)-4-hydroxy-3-methylbutenyl diphosphate: step 1/1.</text>
</comment>
<comment type="pathway">
    <text evidence="1">Isoprenoid biosynthesis; isopentenyl diphosphate biosynthesis via DXP pathway; isopentenyl diphosphate from 1-deoxy-D-xylulose 5-phosphate: step 6/6.</text>
</comment>
<comment type="similarity">
    <text evidence="1">Belongs to the IspH family.</text>
</comment>
<name>ISPH_PSEU2</name>
<proteinExistence type="inferred from homology"/>